<reference key="1">
    <citation type="journal article" date="2006" name="PLoS Genet.">
        <title>Who ate whom? Adaptive Helicobacter genomic changes that accompanied a host jump from early humans to large felines.</title>
        <authorList>
            <person name="Eppinger M."/>
            <person name="Baar C."/>
            <person name="Linz B."/>
            <person name="Raddatz G."/>
            <person name="Lanz C."/>
            <person name="Keller H."/>
            <person name="Morelli G."/>
            <person name="Gressmann H."/>
            <person name="Achtman M."/>
            <person name="Schuster S.C."/>
        </authorList>
    </citation>
    <scope>NUCLEOTIDE SEQUENCE [LARGE SCALE GENOMIC DNA]</scope>
    <source>
        <strain>Sheeba</strain>
    </source>
</reference>
<dbReference type="EMBL" id="AM260522">
    <property type="protein sequence ID" value="CAJ99525.1"/>
    <property type="molecule type" value="Genomic_DNA"/>
</dbReference>
<dbReference type="RefSeq" id="WP_011577638.1">
    <property type="nucleotide sequence ID" value="NC_008229.1"/>
</dbReference>
<dbReference type="SMR" id="Q17XV1"/>
<dbReference type="STRING" id="382638.Hac_0725"/>
<dbReference type="GeneID" id="31758167"/>
<dbReference type="KEGG" id="hac:Hac_0725"/>
<dbReference type="eggNOG" id="COG0322">
    <property type="taxonomic scope" value="Bacteria"/>
</dbReference>
<dbReference type="HOGENOM" id="CLU_014841_3_2_7"/>
<dbReference type="OrthoDB" id="9804933at2"/>
<dbReference type="BioCyc" id="HACI382638:HAC_RS03170-MONOMER"/>
<dbReference type="Proteomes" id="UP000000775">
    <property type="component" value="Chromosome"/>
</dbReference>
<dbReference type="GO" id="GO:0005737">
    <property type="term" value="C:cytoplasm"/>
    <property type="evidence" value="ECO:0007669"/>
    <property type="project" value="UniProtKB-SubCell"/>
</dbReference>
<dbReference type="GO" id="GO:0009380">
    <property type="term" value="C:excinuclease repair complex"/>
    <property type="evidence" value="ECO:0007669"/>
    <property type="project" value="InterPro"/>
</dbReference>
<dbReference type="GO" id="GO:0003677">
    <property type="term" value="F:DNA binding"/>
    <property type="evidence" value="ECO:0007669"/>
    <property type="project" value="UniProtKB-UniRule"/>
</dbReference>
<dbReference type="GO" id="GO:0009381">
    <property type="term" value="F:excinuclease ABC activity"/>
    <property type="evidence" value="ECO:0007669"/>
    <property type="project" value="UniProtKB-UniRule"/>
</dbReference>
<dbReference type="GO" id="GO:0006289">
    <property type="term" value="P:nucleotide-excision repair"/>
    <property type="evidence" value="ECO:0007669"/>
    <property type="project" value="UniProtKB-UniRule"/>
</dbReference>
<dbReference type="GO" id="GO:0009432">
    <property type="term" value="P:SOS response"/>
    <property type="evidence" value="ECO:0007669"/>
    <property type="project" value="UniProtKB-UniRule"/>
</dbReference>
<dbReference type="CDD" id="cd10434">
    <property type="entry name" value="GIY-YIG_UvrC_Cho"/>
    <property type="match status" value="1"/>
</dbReference>
<dbReference type="FunFam" id="3.40.1440.10:FF:000001">
    <property type="entry name" value="UvrABC system protein C"/>
    <property type="match status" value="1"/>
</dbReference>
<dbReference type="Gene3D" id="1.10.150.20">
    <property type="entry name" value="5' to 3' exonuclease, C-terminal subdomain"/>
    <property type="match status" value="1"/>
</dbReference>
<dbReference type="Gene3D" id="3.40.1440.10">
    <property type="entry name" value="GIY-YIG endonuclease"/>
    <property type="match status" value="1"/>
</dbReference>
<dbReference type="Gene3D" id="4.10.860.10">
    <property type="entry name" value="UVR domain"/>
    <property type="match status" value="1"/>
</dbReference>
<dbReference type="Gene3D" id="3.30.420.340">
    <property type="entry name" value="UvrC, RNAse H endonuclease domain"/>
    <property type="match status" value="1"/>
</dbReference>
<dbReference type="HAMAP" id="MF_00203">
    <property type="entry name" value="UvrC"/>
    <property type="match status" value="1"/>
</dbReference>
<dbReference type="InterPro" id="IPR000305">
    <property type="entry name" value="GIY-YIG_endonuc"/>
</dbReference>
<dbReference type="InterPro" id="IPR035901">
    <property type="entry name" value="GIY-YIG_endonuc_sf"/>
</dbReference>
<dbReference type="InterPro" id="IPR047296">
    <property type="entry name" value="GIY-YIG_UvrC_Cho"/>
</dbReference>
<dbReference type="InterPro" id="IPR010994">
    <property type="entry name" value="RuvA_2-like"/>
</dbReference>
<dbReference type="InterPro" id="IPR001943">
    <property type="entry name" value="UVR_dom"/>
</dbReference>
<dbReference type="InterPro" id="IPR036876">
    <property type="entry name" value="UVR_dom_sf"/>
</dbReference>
<dbReference type="InterPro" id="IPR050066">
    <property type="entry name" value="UvrABC_protein_C"/>
</dbReference>
<dbReference type="InterPro" id="IPR004791">
    <property type="entry name" value="UvrC"/>
</dbReference>
<dbReference type="InterPro" id="IPR001162">
    <property type="entry name" value="UvrC_RNase_H_dom"/>
</dbReference>
<dbReference type="InterPro" id="IPR038476">
    <property type="entry name" value="UvrC_RNase_H_dom_sf"/>
</dbReference>
<dbReference type="NCBIfam" id="TIGR00194">
    <property type="entry name" value="uvrC"/>
    <property type="match status" value="1"/>
</dbReference>
<dbReference type="PANTHER" id="PTHR30562:SF1">
    <property type="entry name" value="UVRABC SYSTEM PROTEIN C"/>
    <property type="match status" value="1"/>
</dbReference>
<dbReference type="PANTHER" id="PTHR30562">
    <property type="entry name" value="UVRC/OXIDOREDUCTASE"/>
    <property type="match status" value="1"/>
</dbReference>
<dbReference type="Pfam" id="PF01541">
    <property type="entry name" value="GIY-YIG"/>
    <property type="match status" value="1"/>
</dbReference>
<dbReference type="Pfam" id="PF02151">
    <property type="entry name" value="UVR"/>
    <property type="match status" value="1"/>
</dbReference>
<dbReference type="Pfam" id="PF22920">
    <property type="entry name" value="UvrC_RNaseH"/>
    <property type="match status" value="1"/>
</dbReference>
<dbReference type="Pfam" id="PF08459">
    <property type="entry name" value="UvrC_RNaseH_dom"/>
    <property type="match status" value="1"/>
</dbReference>
<dbReference type="SMART" id="SM00465">
    <property type="entry name" value="GIYc"/>
    <property type="match status" value="1"/>
</dbReference>
<dbReference type="SUPFAM" id="SSF46600">
    <property type="entry name" value="C-terminal UvrC-binding domain of UvrB"/>
    <property type="match status" value="1"/>
</dbReference>
<dbReference type="SUPFAM" id="SSF82771">
    <property type="entry name" value="GIY-YIG endonuclease"/>
    <property type="match status" value="1"/>
</dbReference>
<dbReference type="SUPFAM" id="SSF47781">
    <property type="entry name" value="RuvA domain 2-like"/>
    <property type="match status" value="1"/>
</dbReference>
<dbReference type="PROSITE" id="PS50164">
    <property type="entry name" value="GIY_YIG"/>
    <property type="match status" value="1"/>
</dbReference>
<dbReference type="PROSITE" id="PS50151">
    <property type="entry name" value="UVR"/>
    <property type="match status" value="1"/>
</dbReference>
<dbReference type="PROSITE" id="PS50165">
    <property type="entry name" value="UVRC"/>
    <property type="match status" value="1"/>
</dbReference>
<evidence type="ECO:0000255" key="1">
    <source>
        <dbReference type="HAMAP-Rule" id="MF_00203"/>
    </source>
</evidence>
<name>UVRC_HELAH</name>
<comment type="function">
    <text evidence="1">The UvrABC repair system catalyzes the recognition and processing of DNA lesions. UvrC both incises the 5' and 3' sides of the lesion. The N-terminal half is responsible for the 3' incision and the C-terminal half is responsible for the 5' incision.</text>
</comment>
<comment type="subunit">
    <text evidence="1">Interacts with UvrB in an incision complex.</text>
</comment>
<comment type="subcellular location">
    <subcellularLocation>
        <location evidence="1">Cytoplasm</location>
    </subcellularLocation>
</comment>
<comment type="similarity">
    <text evidence="1">Belongs to the UvrC family.</text>
</comment>
<protein>
    <recommendedName>
        <fullName evidence="1">UvrABC system protein C</fullName>
        <shortName evidence="1">Protein UvrC</shortName>
    </recommendedName>
    <alternativeName>
        <fullName evidence="1">Excinuclease ABC subunit C</fullName>
    </alternativeName>
</protein>
<feature type="chain" id="PRO_1000077794" description="UvrABC system protein C">
    <location>
        <begin position="1"/>
        <end position="594"/>
    </location>
</feature>
<feature type="domain" description="GIY-YIG" evidence="1">
    <location>
        <begin position="13"/>
        <end position="99"/>
    </location>
</feature>
<feature type="domain" description="UVR" evidence="1">
    <location>
        <begin position="205"/>
        <end position="240"/>
    </location>
</feature>
<keyword id="KW-0963">Cytoplasm</keyword>
<keyword id="KW-0227">DNA damage</keyword>
<keyword id="KW-0228">DNA excision</keyword>
<keyword id="KW-0234">DNA repair</keyword>
<keyword id="KW-0267">Excision nuclease</keyword>
<keyword id="KW-0742">SOS response</keyword>
<sequence>MADLLSSLKNLSNGSGVYQYFDKNRQLLYIGKAKNLKKRIKSYFSIHNNEITPNHRTSLRIQMMVKQIAFLETILVENEQDALILENSLIKQLKPKYNILLRDDKTYPYIYMDFSTDFPIPLITRKILKQLGVKYFGPFTSGAKDILDSLYELLPLVQKKNCIKDKKACMFYQIERCKAPCENKITKEEYLKIAKECLEMIENKDKLIKELQLKMDRLSSNLRFEEALIYRDRISKIQKIAPFTCMDLAKLYDLDIFAFYGKNNRAVLVKMFMRGGKIISSAFEKIHSLNGFDADEAMKQAIINHYQSHLPLMPEQILLNACSNETLKELQEFIYHKHSKKITLNIPKKGDKLALIEIAMKNAQEIFSQEKTSNEEEILEEVRSLLNLECVPYRVEIFDTSHHANSQCVGGMVVYENSAFQKNSYRRYHLKGSNEYAQMSELLTRRALDFAKEPPPNLWVIDGGRVQLNIALETLKSSGSFVEVIAISKEKRDSKAYRSKGGAKDIIHTMSDTFKLLPSDKRLQWVQKLRDESHRYAINFHRSTKIKNMKQIALLKEKGIGEASVKKLLDYFGSFEAIEKASEQEKNAVLKKRN</sequence>
<accession>Q17XV1</accession>
<proteinExistence type="inferred from homology"/>
<gene>
    <name evidence="1" type="primary">uvrC</name>
    <name type="ordered locus">Hac_0725</name>
</gene>
<organism>
    <name type="scientific">Helicobacter acinonychis (strain Sheeba)</name>
    <dbReference type="NCBI Taxonomy" id="382638"/>
    <lineage>
        <taxon>Bacteria</taxon>
        <taxon>Pseudomonadati</taxon>
        <taxon>Campylobacterota</taxon>
        <taxon>Epsilonproteobacteria</taxon>
        <taxon>Campylobacterales</taxon>
        <taxon>Helicobacteraceae</taxon>
        <taxon>Helicobacter</taxon>
    </lineage>
</organism>